<name>NDUS4_DICDI</name>
<dbReference type="EMBL" id="AAFI02000020">
    <property type="protein sequence ID" value="EDR41095.1"/>
    <property type="molecule type" value="Genomic_DNA"/>
</dbReference>
<dbReference type="RefSeq" id="XP_001732977.1">
    <property type="nucleotide sequence ID" value="XM_001732925.1"/>
</dbReference>
<dbReference type="SMR" id="Q8T1V6"/>
<dbReference type="FunCoup" id="Q8T1V6">
    <property type="interactions" value="282"/>
</dbReference>
<dbReference type="STRING" id="44689.Q8T1V6"/>
<dbReference type="PaxDb" id="44689-DDB0237483"/>
<dbReference type="EnsemblProtists" id="EDR41095">
    <property type="protein sequence ID" value="EDR41095"/>
    <property type="gene ID" value="DDB_G0295657"/>
</dbReference>
<dbReference type="GeneID" id="8621140"/>
<dbReference type="KEGG" id="ddi:DDB_G0295657"/>
<dbReference type="dictyBase" id="DDB_G0295657">
    <property type="gene designation" value="ndufs4"/>
</dbReference>
<dbReference type="VEuPathDB" id="AmoebaDB:DDB_G0295657"/>
<dbReference type="eggNOG" id="KOG3389">
    <property type="taxonomic scope" value="Eukaryota"/>
</dbReference>
<dbReference type="HOGENOM" id="CLU_077196_3_0_1"/>
<dbReference type="InParanoid" id="Q8T1V6"/>
<dbReference type="OMA" id="PSRNTMQ"/>
<dbReference type="PhylomeDB" id="Q8T1V6"/>
<dbReference type="PRO" id="PR:Q8T1V6"/>
<dbReference type="Proteomes" id="UP000002195">
    <property type="component" value="Chromosome 2"/>
</dbReference>
<dbReference type="GO" id="GO:0005743">
    <property type="term" value="C:mitochondrial inner membrane"/>
    <property type="evidence" value="ECO:0007669"/>
    <property type="project" value="UniProtKB-SubCell"/>
</dbReference>
<dbReference type="GO" id="GO:0005739">
    <property type="term" value="C:mitochondrion"/>
    <property type="evidence" value="ECO:0000250"/>
    <property type="project" value="dictyBase"/>
</dbReference>
<dbReference type="GO" id="GO:0045271">
    <property type="term" value="C:respiratory chain complex I"/>
    <property type="evidence" value="ECO:0000250"/>
    <property type="project" value="dictyBase"/>
</dbReference>
<dbReference type="GO" id="GO:0008137">
    <property type="term" value="F:NADH dehydrogenase (ubiquinone) activity"/>
    <property type="evidence" value="ECO:0000250"/>
    <property type="project" value="dictyBase"/>
</dbReference>
<dbReference type="GO" id="GO:0022900">
    <property type="term" value="P:electron transport chain"/>
    <property type="evidence" value="ECO:0007669"/>
    <property type="project" value="InterPro"/>
</dbReference>
<dbReference type="Gene3D" id="3.30.160.190">
    <property type="entry name" value="atu1810 like domain"/>
    <property type="match status" value="1"/>
</dbReference>
<dbReference type="InterPro" id="IPR006885">
    <property type="entry name" value="NADH_UbQ_FeS_4_mit-like"/>
</dbReference>
<dbReference type="InterPro" id="IPR038532">
    <property type="entry name" value="NDUFS4-like_sf"/>
</dbReference>
<dbReference type="PANTHER" id="PTHR12219:SF8">
    <property type="entry name" value="NADH DEHYDROGENASE [UBIQUINONE] IRON-SULFUR PROTEIN 4, MITOCHONDRIAL"/>
    <property type="match status" value="1"/>
</dbReference>
<dbReference type="PANTHER" id="PTHR12219">
    <property type="entry name" value="NADH-UBIQUINONE OXIDOREDUCTASE"/>
    <property type="match status" value="1"/>
</dbReference>
<dbReference type="Pfam" id="PF04800">
    <property type="entry name" value="NDUS4"/>
    <property type="match status" value="1"/>
</dbReference>
<keyword id="KW-0249">Electron transport</keyword>
<keyword id="KW-0472">Membrane</keyword>
<keyword id="KW-0496">Mitochondrion</keyword>
<keyword id="KW-0999">Mitochondrion inner membrane</keyword>
<keyword id="KW-1185">Reference proteome</keyword>
<keyword id="KW-0679">Respiratory chain</keyword>
<keyword id="KW-0809">Transit peptide</keyword>
<keyword id="KW-0813">Transport</keyword>
<proteinExistence type="inferred from homology"/>
<sequence length="190" mass="21749">MLKKFLISSIVKPTFQSRIIASTTLNGGAGRATFCSVNSINPNPTASQIKVDQEDLEVGEHLVIDDPNQQHIKSFLNGVEFNGKSVNIYRPSRNTMQTGTLRTKKWVIELPFNPKWNDRLMGWWASKDTLNQLNLRFNSETDAVAYCKEIGLNYNIVEEDVTLRKKKKYGHRFRYRGDLVGEKEREVGIN</sequence>
<accession>Q8T1V6</accession>
<evidence type="ECO:0000250" key="1"/>
<evidence type="ECO:0000305" key="2"/>
<feature type="transit peptide" description="Mitochondrion" evidence="1">
    <location>
        <begin position="1"/>
        <end status="unknown"/>
    </location>
</feature>
<feature type="chain" id="PRO_0000330639" description="NADH dehydrogenase [ubiquinone] iron-sulfur protein 4, mitochondrial">
    <location>
        <begin status="unknown"/>
        <end position="190"/>
    </location>
</feature>
<protein>
    <recommendedName>
        <fullName>NADH dehydrogenase [ubiquinone] iron-sulfur protein 4, mitochondrial</fullName>
    </recommendedName>
</protein>
<gene>
    <name type="primary">ndufs4</name>
    <name type="ORF">DDB_G0295657</name>
</gene>
<reference key="1">
    <citation type="journal article" date="2002" name="Nature">
        <title>Sequence and analysis of chromosome 2 of Dictyostelium discoideum.</title>
        <authorList>
            <person name="Gloeckner G."/>
            <person name="Eichinger L."/>
            <person name="Szafranski K."/>
            <person name="Pachebat J.A."/>
            <person name="Bankier A.T."/>
            <person name="Dear P.H."/>
            <person name="Lehmann R."/>
            <person name="Baumgart C."/>
            <person name="Parra G."/>
            <person name="Abril J.F."/>
            <person name="Guigo R."/>
            <person name="Kumpf K."/>
            <person name="Tunggal B."/>
            <person name="Cox E.C."/>
            <person name="Quail M.A."/>
            <person name="Platzer M."/>
            <person name="Rosenthal A."/>
            <person name="Noegel A.A."/>
        </authorList>
    </citation>
    <scope>NUCLEOTIDE SEQUENCE [LARGE SCALE GENOMIC DNA]</scope>
    <source>
        <strain>AX4</strain>
    </source>
</reference>
<reference key="2">
    <citation type="journal article" date="2005" name="Nature">
        <title>The genome of the social amoeba Dictyostelium discoideum.</title>
        <authorList>
            <person name="Eichinger L."/>
            <person name="Pachebat J.A."/>
            <person name="Gloeckner G."/>
            <person name="Rajandream M.A."/>
            <person name="Sucgang R."/>
            <person name="Berriman M."/>
            <person name="Song J."/>
            <person name="Olsen R."/>
            <person name="Szafranski K."/>
            <person name="Xu Q."/>
            <person name="Tunggal B."/>
            <person name="Kummerfeld S."/>
            <person name="Madera M."/>
            <person name="Konfortov B.A."/>
            <person name="Rivero F."/>
            <person name="Bankier A.T."/>
            <person name="Lehmann R."/>
            <person name="Hamlin N."/>
            <person name="Davies R."/>
            <person name="Gaudet P."/>
            <person name="Fey P."/>
            <person name="Pilcher K."/>
            <person name="Chen G."/>
            <person name="Saunders D."/>
            <person name="Sodergren E.J."/>
            <person name="Davis P."/>
            <person name="Kerhornou A."/>
            <person name="Nie X."/>
            <person name="Hall N."/>
            <person name="Anjard C."/>
            <person name="Hemphill L."/>
            <person name="Bason N."/>
            <person name="Farbrother P."/>
            <person name="Desany B."/>
            <person name="Just E."/>
            <person name="Morio T."/>
            <person name="Rost R."/>
            <person name="Churcher C.M."/>
            <person name="Cooper J."/>
            <person name="Haydock S."/>
            <person name="van Driessche N."/>
            <person name="Cronin A."/>
            <person name="Goodhead I."/>
            <person name="Muzny D.M."/>
            <person name="Mourier T."/>
            <person name="Pain A."/>
            <person name="Lu M."/>
            <person name="Harper D."/>
            <person name="Lindsay R."/>
            <person name="Hauser H."/>
            <person name="James K.D."/>
            <person name="Quiles M."/>
            <person name="Madan Babu M."/>
            <person name="Saito T."/>
            <person name="Buchrieser C."/>
            <person name="Wardroper A."/>
            <person name="Felder M."/>
            <person name="Thangavelu M."/>
            <person name="Johnson D."/>
            <person name="Knights A."/>
            <person name="Loulseged H."/>
            <person name="Mungall K.L."/>
            <person name="Oliver K."/>
            <person name="Price C."/>
            <person name="Quail M.A."/>
            <person name="Urushihara H."/>
            <person name="Hernandez J."/>
            <person name="Rabbinowitsch E."/>
            <person name="Steffen D."/>
            <person name="Sanders M."/>
            <person name="Ma J."/>
            <person name="Kohara Y."/>
            <person name="Sharp S."/>
            <person name="Simmonds M.N."/>
            <person name="Spiegler S."/>
            <person name="Tivey A."/>
            <person name="Sugano S."/>
            <person name="White B."/>
            <person name="Walker D."/>
            <person name="Woodward J.R."/>
            <person name="Winckler T."/>
            <person name="Tanaka Y."/>
            <person name="Shaulsky G."/>
            <person name="Schleicher M."/>
            <person name="Weinstock G.M."/>
            <person name="Rosenthal A."/>
            <person name="Cox E.C."/>
            <person name="Chisholm R.L."/>
            <person name="Gibbs R.A."/>
            <person name="Loomis W.F."/>
            <person name="Platzer M."/>
            <person name="Kay R.R."/>
            <person name="Williams J.G."/>
            <person name="Dear P.H."/>
            <person name="Noegel A.A."/>
            <person name="Barrell B.G."/>
            <person name="Kuspa A."/>
        </authorList>
    </citation>
    <scope>NUCLEOTIDE SEQUENCE [LARGE SCALE GENOMIC DNA]</scope>
    <source>
        <strain>AX4</strain>
    </source>
</reference>
<comment type="function">
    <text evidence="1">Accessory subunit of the mitochondrial membrane respiratory chain NADH dehydrogenase (Complex I), that is believed not to be involved in catalysis. Complex I functions in the transfer of electrons from NADH to the respiratory chain. The immediate electron acceptor for the enzyme is believed to be ubiquinone (By similarity).</text>
</comment>
<comment type="subunit">
    <text evidence="1">Complex I is composed of 45 different subunits. This is a component of the iron-sulfur (IP) fragment of the enzyme (By similarity).</text>
</comment>
<comment type="subcellular location">
    <subcellularLocation>
        <location evidence="1">Mitochondrion inner membrane</location>
        <topology evidence="1">Peripheral membrane protein</topology>
        <orientation evidence="1">Matrix side</orientation>
    </subcellularLocation>
</comment>
<comment type="similarity">
    <text evidence="2">Belongs to the complex I NDUFS4 subunit family.</text>
</comment>
<organism>
    <name type="scientific">Dictyostelium discoideum</name>
    <name type="common">Social amoeba</name>
    <dbReference type="NCBI Taxonomy" id="44689"/>
    <lineage>
        <taxon>Eukaryota</taxon>
        <taxon>Amoebozoa</taxon>
        <taxon>Evosea</taxon>
        <taxon>Eumycetozoa</taxon>
        <taxon>Dictyostelia</taxon>
        <taxon>Dictyosteliales</taxon>
        <taxon>Dictyosteliaceae</taxon>
        <taxon>Dictyostelium</taxon>
    </lineage>
</organism>